<name>ILVD_RUTMC</name>
<keyword id="KW-0001">2Fe-2S</keyword>
<keyword id="KW-0028">Amino-acid biosynthesis</keyword>
<keyword id="KW-0100">Branched-chain amino acid biosynthesis</keyword>
<keyword id="KW-0408">Iron</keyword>
<keyword id="KW-0411">Iron-sulfur</keyword>
<keyword id="KW-0456">Lyase</keyword>
<keyword id="KW-0460">Magnesium</keyword>
<keyword id="KW-0479">Metal-binding</keyword>
<sequence length="559" mass="59561">MRRKIMYNPRKYSSQVVDGFERAPSRAMLYPVGFTKEDFNKPQVGIASTWSMVTPCNMHINKLADETLKGVNATGGKAIIFNTITISDGISMGSEGMKYSLVSREVIADSIETVVGCQGFDGVVAIGGCDKNMPGCIIGLVRLNRPSIFVYGGTIQPGKNHTDVVSVFEAVGQFANHTIDAIELENIEKIAIPGPGSCGGMYTANTMASAIEALGMSLPNSSAQDAISDDKNNDCVQAGQAVLNLLNKDIKPRDIMTMKAFENAITVIIALGGSTNAVLHLIAMASAAEVNLKIDDFTRIGQKVPVIADLKPSGKYMMSELVKIGGTLPLMKMLLDAGLLHGDCLTVTGKTLAENLENVKPYADSQEIIRALDNPIKKDSHLRILRGNLATDGAVAKITGKEGLSFKGNAKCFSREEDALEAILNNQIITGDVIVIRYEGPVGGPGMREMLAPTSAVMGKGLGDKVALITDGRFSGGTHGFVVGHITPEAFEGGVLAVVKDGDEILIDAQNNVLELLVEQAIIDKRLYNWTQPKPNYTKGVLAKFAKLAKSASEGAVTD</sequence>
<reference key="1">
    <citation type="journal article" date="2007" name="Science">
        <title>The Calyptogena magnifica chemoautotrophic symbiont genome.</title>
        <authorList>
            <person name="Newton I.L.G."/>
            <person name="Woyke T."/>
            <person name="Auchtung T.A."/>
            <person name="Dilly G.F."/>
            <person name="Dutton R.J."/>
            <person name="Fisher M.C."/>
            <person name="Fontanez K.M."/>
            <person name="Lau E."/>
            <person name="Stewart F.J."/>
            <person name="Richardson P.M."/>
            <person name="Barry K.W."/>
            <person name="Saunders E."/>
            <person name="Detter J.C."/>
            <person name="Wu D."/>
            <person name="Eisen J.A."/>
            <person name="Cavanaugh C.M."/>
        </authorList>
    </citation>
    <scope>NUCLEOTIDE SEQUENCE [LARGE SCALE GENOMIC DNA]</scope>
</reference>
<dbReference type="EC" id="4.2.1.9" evidence="1"/>
<dbReference type="EMBL" id="CP000488">
    <property type="protein sequence ID" value="ABL02283.1"/>
    <property type="molecule type" value="Genomic_DNA"/>
</dbReference>
<dbReference type="SMR" id="A1AWH6"/>
<dbReference type="STRING" id="413404.Rmag_0529"/>
<dbReference type="KEGG" id="rma:Rmag_0529"/>
<dbReference type="eggNOG" id="COG0129">
    <property type="taxonomic scope" value="Bacteria"/>
</dbReference>
<dbReference type="HOGENOM" id="CLU_014271_4_1_6"/>
<dbReference type="UniPathway" id="UPA00047">
    <property type="reaction ID" value="UER00057"/>
</dbReference>
<dbReference type="UniPathway" id="UPA00049">
    <property type="reaction ID" value="UER00061"/>
</dbReference>
<dbReference type="Proteomes" id="UP000002587">
    <property type="component" value="Chromosome"/>
</dbReference>
<dbReference type="GO" id="GO:0051537">
    <property type="term" value="F:2 iron, 2 sulfur cluster binding"/>
    <property type="evidence" value="ECO:0007669"/>
    <property type="project" value="UniProtKB-UniRule"/>
</dbReference>
<dbReference type="GO" id="GO:0004160">
    <property type="term" value="F:dihydroxy-acid dehydratase activity"/>
    <property type="evidence" value="ECO:0007669"/>
    <property type="project" value="UniProtKB-UniRule"/>
</dbReference>
<dbReference type="GO" id="GO:0000287">
    <property type="term" value="F:magnesium ion binding"/>
    <property type="evidence" value="ECO:0007669"/>
    <property type="project" value="UniProtKB-UniRule"/>
</dbReference>
<dbReference type="GO" id="GO:0009097">
    <property type="term" value="P:isoleucine biosynthetic process"/>
    <property type="evidence" value="ECO:0007669"/>
    <property type="project" value="UniProtKB-UniRule"/>
</dbReference>
<dbReference type="GO" id="GO:0009099">
    <property type="term" value="P:L-valine biosynthetic process"/>
    <property type="evidence" value="ECO:0007669"/>
    <property type="project" value="UniProtKB-UniRule"/>
</dbReference>
<dbReference type="FunFam" id="3.50.30.80:FF:000001">
    <property type="entry name" value="Dihydroxy-acid dehydratase"/>
    <property type="match status" value="1"/>
</dbReference>
<dbReference type="Gene3D" id="3.50.30.80">
    <property type="entry name" value="IlvD/EDD C-terminal domain-like"/>
    <property type="match status" value="1"/>
</dbReference>
<dbReference type="HAMAP" id="MF_00012">
    <property type="entry name" value="IlvD"/>
    <property type="match status" value="1"/>
</dbReference>
<dbReference type="InterPro" id="IPR050165">
    <property type="entry name" value="DHAD_IlvD/Edd"/>
</dbReference>
<dbReference type="InterPro" id="IPR042096">
    <property type="entry name" value="Dihydro-acid_dehy_C"/>
</dbReference>
<dbReference type="InterPro" id="IPR004404">
    <property type="entry name" value="DihydroxyA_deHydtase"/>
</dbReference>
<dbReference type="InterPro" id="IPR020558">
    <property type="entry name" value="DiOHA_6PGluconate_deHydtase_CS"/>
</dbReference>
<dbReference type="InterPro" id="IPR056740">
    <property type="entry name" value="ILV_EDD_C"/>
</dbReference>
<dbReference type="InterPro" id="IPR000581">
    <property type="entry name" value="ILV_EDD_N"/>
</dbReference>
<dbReference type="InterPro" id="IPR037237">
    <property type="entry name" value="IlvD/EDD_N"/>
</dbReference>
<dbReference type="NCBIfam" id="TIGR00110">
    <property type="entry name" value="ilvD"/>
    <property type="match status" value="1"/>
</dbReference>
<dbReference type="NCBIfam" id="NF002068">
    <property type="entry name" value="PRK00911.1"/>
    <property type="match status" value="1"/>
</dbReference>
<dbReference type="PANTHER" id="PTHR21000">
    <property type="entry name" value="DIHYDROXY-ACID DEHYDRATASE DAD"/>
    <property type="match status" value="1"/>
</dbReference>
<dbReference type="PANTHER" id="PTHR21000:SF5">
    <property type="entry name" value="DIHYDROXY-ACID DEHYDRATASE, MITOCHONDRIAL"/>
    <property type="match status" value="1"/>
</dbReference>
<dbReference type="Pfam" id="PF24877">
    <property type="entry name" value="ILV_EDD_C"/>
    <property type="match status" value="1"/>
</dbReference>
<dbReference type="Pfam" id="PF00920">
    <property type="entry name" value="ILVD_EDD_N"/>
    <property type="match status" value="1"/>
</dbReference>
<dbReference type="SUPFAM" id="SSF143975">
    <property type="entry name" value="IlvD/EDD N-terminal domain-like"/>
    <property type="match status" value="1"/>
</dbReference>
<dbReference type="SUPFAM" id="SSF52016">
    <property type="entry name" value="LeuD/IlvD-like"/>
    <property type="match status" value="1"/>
</dbReference>
<dbReference type="PROSITE" id="PS00886">
    <property type="entry name" value="ILVD_EDD_1"/>
    <property type="match status" value="1"/>
</dbReference>
<dbReference type="PROSITE" id="PS00887">
    <property type="entry name" value="ILVD_EDD_2"/>
    <property type="match status" value="1"/>
</dbReference>
<proteinExistence type="inferred from homology"/>
<evidence type="ECO:0000255" key="1">
    <source>
        <dbReference type="HAMAP-Rule" id="MF_00012"/>
    </source>
</evidence>
<feature type="chain" id="PRO_0000321606" description="Dihydroxy-acid dehydratase">
    <location>
        <begin position="1"/>
        <end position="559"/>
    </location>
</feature>
<feature type="active site" description="Proton acceptor" evidence="1">
    <location>
        <position position="475"/>
    </location>
</feature>
<feature type="binding site" evidence="1">
    <location>
        <position position="56"/>
    </location>
    <ligand>
        <name>[2Fe-2S] cluster</name>
        <dbReference type="ChEBI" id="CHEBI:190135"/>
    </ligand>
</feature>
<feature type="binding site" evidence="1">
    <location>
        <position position="88"/>
    </location>
    <ligand>
        <name>Mg(2+)</name>
        <dbReference type="ChEBI" id="CHEBI:18420"/>
    </ligand>
</feature>
<feature type="binding site" evidence="1">
    <location>
        <position position="129"/>
    </location>
    <ligand>
        <name>[2Fe-2S] cluster</name>
        <dbReference type="ChEBI" id="CHEBI:190135"/>
    </ligand>
</feature>
<feature type="binding site" evidence="1">
    <location>
        <position position="130"/>
    </location>
    <ligand>
        <name>Mg(2+)</name>
        <dbReference type="ChEBI" id="CHEBI:18420"/>
    </ligand>
</feature>
<feature type="binding site" description="via carbamate group" evidence="1">
    <location>
        <position position="131"/>
    </location>
    <ligand>
        <name>Mg(2+)</name>
        <dbReference type="ChEBI" id="CHEBI:18420"/>
    </ligand>
</feature>
<feature type="binding site" evidence="1">
    <location>
        <position position="198"/>
    </location>
    <ligand>
        <name>[2Fe-2S] cluster</name>
        <dbReference type="ChEBI" id="CHEBI:190135"/>
    </ligand>
</feature>
<feature type="binding site" evidence="1">
    <location>
        <position position="449"/>
    </location>
    <ligand>
        <name>Mg(2+)</name>
        <dbReference type="ChEBI" id="CHEBI:18420"/>
    </ligand>
</feature>
<feature type="modified residue" description="N6-carboxylysine" evidence="1">
    <location>
        <position position="131"/>
    </location>
</feature>
<comment type="function">
    <text evidence="1">Functions in the biosynthesis of branched-chain amino acids. Catalyzes the dehydration of (2R,3R)-2,3-dihydroxy-3-methylpentanoate (2,3-dihydroxy-3-methylvalerate) into 2-oxo-3-methylpentanoate (2-oxo-3-methylvalerate) and of (2R)-2,3-dihydroxy-3-methylbutanoate (2,3-dihydroxyisovalerate) into 2-oxo-3-methylbutanoate (2-oxoisovalerate), the penultimate precursor to L-isoleucine and L-valine, respectively.</text>
</comment>
<comment type="catalytic activity">
    <reaction evidence="1">
        <text>(2R)-2,3-dihydroxy-3-methylbutanoate = 3-methyl-2-oxobutanoate + H2O</text>
        <dbReference type="Rhea" id="RHEA:24809"/>
        <dbReference type="ChEBI" id="CHEBI:11851"/>
        <dbReference type="ChEBI" id="CHEBI:15377"/>
        <dbReference type="ChEBI" id="CHEBI:49072"/>
        <dbReference type="EC" id="4.2.1.9"/>
    </reaction>
    <physiologicalReaction direction="left-to-right" evidence="1">
        <dbReference type="Rhea" id="RHEA:24810"/>
    </physiologicalReaction>
</comment>
<comment type="catalytic activity">
    <reaction evidence="1">
        <text>(2R,3R)-2,3-dihydroxy-3-methylpentanoate = (S)-3-methyl-2-oxopentanoate + H2O</text>
        <dbReference type="Rhea" id="RHEA:27694"/>
        <dbReference type="ChEBI" id="CHEBI:15377"/>
        <dbReference type="ChEBI" id="CHEBI:35146"/>
        <dbReference type="ChEBI" id="CHEBI:49258"/>
        <dbReference type="EC" id="4.2.1.9"/>
    </reaction>
    <physiologicalReaction direction="left-to-right" evidence="1">
        <dbReference type="Rhea" id="RHEA:27695"/>
    </physiologicalReaction>
</comment>
<comment type="cofactor">
    <cofactor evidence="1">
        <name>[2Fe-2S] cluster</name>
        <dbReference type="ChEBI" id="CHEBI:190135"/>
    </cofactor>
    <text evidence="1">Binds 1 [2Fe-2S] cluster per subunit. This cluster acts as a Lewis acid cofactor.</text>
</comment>
<comment type="cofactor">
    <cofactor evidence="1">
        <name>Mg(2+)</name>
        <dbReference type="ChEBI" id="CHEBI:18420"/>
    </cofactor>
</comment>
<comment type="pathway">
    <text evidence="1">Amino-acid biosynthesis; L-isoleucine biosynthesis; L-isoleucine from 2-oxobutanoate: step 3/4.</text>
</comment>
<comment type="pathway">
    <text evidence="1">Amino-acid biosynthesis; L-valine biosynthesis; L-valine from pyruvate: step 3/4.</text>
</comment>
<comment type="subunit">
    <text evidence="1">Homodimer.</text>
</comment>
<comment type="similarity">
    <text evidence="1">Belongs to the IlvD/Edd family.</text>
</comment>
<gene>
    <name evidence="1" type="primary">ilvD</name>
    <name type="ordered locus">Rmag_0529</name>
</gene>
<accession>A1AWH6</accession>
<organism>
    <name type="scientific">Ruthia magnifica subsp. Calyptogena magnifica</name>
    <dbReference type="NCBI Taxonomy" id="413404"/>
    <lineage>
        <taxon>Bacteria</taxon>
        <taxon>Pseudomonadati</taxon>
        <taxon>Pseudomonadota</taxon>
        <taxon>Gammaproteobacteria</taxon>
        <taxon>Candidatus Pseudothioglobaceae</taxon>
        <taxon>Candidatus Ruthturnera</taxon>
    </lineage>
</organism>
<protein>
    <recommendedName>
        <fullName evidence="1">Dihydroxy-acid dehydratase</fullName>
        <shortName evidence="1">DAD</shortName>
        <ecNumber evidence="1">4.2.1.9</ecNumber>
    </recommendedName>
</protein>